<comment type="function">
    <text evidence="1">Catalyzes the reversible conversion of 2-phosphoglycerate (2-PG) into phosphoenolpyruvate (PEP). It is essential for the degradation of carbohydrates via glycolysis.</text>
</comment>
<comment type="catalytic activity">
    <reaction evidence="1">
        <text>(2R)-2-phosphoglycerate = phosphoenolpyruvate + H2O</text>
        <dbReference type="Rhea" id="RHEA:10164"/>
        <dbReference type="ChEBI" id="CHEBI:15377"/>
        <dbReference type="ChEBI" id="CHEBI:58289"/>
        <dbReference type="ChEBI" id="CHEBI:58702"/>
        <dbReference type="EC" id="4.2.1.11"/>
    </reaction>
</comment>
<comment type="cofactor">
    <cofactor evidence="1">
        <name>Mg(2+)</name>
        <dbReference type="ChEBI" id="CHEBI:18420"/>
    </cofactor>
    <text evidence="1">Binds a second Mg(2+) ion via substrate during catalysis.</text>
</comment>
<comment type="pathway">
    <text evidence="1">Carbohydrate degradation; glycolysis; pyruvate from D-glyceraldehyde 3-phosphate: step 4/5.</text>
</comment>
<comment type="subcellular location">
    <subcellularLocation>
        <location evidence="1">Cytoplasm</location>
    </subcellularLocation>
    <subcellularLocation>
        <location evidence="1">Secreted</location>
    </subcellularLocation>
    <subcellularLocation>
        <location evidence="1">Cell surface</location>
    </subcellularLocation>
    <text evidence="1">Fractions of enolase are present in both the cytoplasm and on the cell surface.</text>
</comment>
<comment type="similarity">
    <text evidence="1">Belongs to the enolase family.</text>
</comment>
<organism>
    <name type="scientific">Helicobacter pylori (strain ATCC 700392 / 26695)</name>
    <name type="common">Campylobacter pylori</name>
    <dbReference type="NCBI Taxonomy" id="85962"/>
    <lineage>
        <taxon>Bacteria</taxon>
        <taxon>Pseudomonadati</taxon>
        <taxon>Campylobacterota</taxon>
        <taxon>Epsilonproteobacteria</taxon>
        <taxon>Campylobacterales</taxon>
        <taxon>Helicobacteraceae</taxon>
        <taxon>Helicobacter</taxon>
    </lineage>
</organism>
<proteinExistence type="inferred from homology"/>
<dbReference type="EC" id="4.2.1.11" evidence="1"/>
<dbReference type="EMBL" id="AE000511">
    <property type="protein sequence ID" value="AAD07219.1"/>
    <property type="molecule type" value="Genomic_DNA"/>
</dbReference>
<dbReference type="EMBL" id="U13756">
    <property type="protein sequence ID" value="AAC43380.1"/>
    <property type="molecule type" value="Genomic_DNA"/>
</dbReference>
<dbReference type="EMBL" id="Z35478">
    <property type="status" value="NOT_ANNOTATED_CDS"/>
    <property type="molecule type" value="Genomic_DNA"/>
</dbReference>
<dbReference type="PIR" id="B64539">
    <property type="entry name" value="S58684"/>
</dbReference>
<dbReference type="RefSeq" id="NP_206953.1">
    <property type="nucleotide sequence ID" value="NC_000915.1"/>
</dbReference>
<dbReference type="RefSeq" id="WP_000955673.1">
    <property type="nucleotide sequence ID" value="NC_018939.1"/>
</dbReference>
<dbReference type="SMR" id="P48285"/>
<dbReference type="DIP" id="DIP-3344N"/>
<dbReference type="FunCoup" id="P48285">
    <property type="interactions" value="341"/>
</dbReference>
<dbReference type="IntAct" id="P48285">
    <property type="interactions" value="4"/>
</dbReference>
<dbReference type="MINT" id="P48285"/>
<dbReference type="STRING" id="85962.HP_0154"/>
<dbReference type="PaxDb" id="85962-C694_00770"/>
<dbReference type="EnsemblBacteria" id="AAD07219">
    <property type="protein sequence ID" value="AAD07219"/>
    <property type="gene ID" value="HP_0154"/>
</dbReference>
<dbReference type="KEGG" id="heo:C694_00770"/>
<dbReference type="KEGG" id="hpy:HP_0154"/>
<dbReference type="PATRIC" id="fig|85962.47.peg.167"/>
<dbReference type="eggNOG" id="COG0148">
    <property type="taxonomic scope" value="Bacteria"/>
</dbReference>
<dbReference type="InParanoid" id="P48285"/>
<dbReference type="OrthoDB" id="9804716at2"/>
<dbReference type="PhylomeDB" id="P48285"/>
<dbReference type="UniPathway" id="UPA00109">
    <property type="reaction ID" value="UER00187"/>
</dbReference>
<dbReference type="Proteomes" id="UP000000429">
    <property type="component" value="Chromosome"/>
</dbReference>
<dbReference type="GO" id="GO:0009986">
    <property type="term" value="C:cell surface"/>
    <property type="evidence" value="ECO:0007669"/>
    <property type="project" value="UniProtKB-SubCell"/>
</dbReference>
<dbReference type="GO" id="GO:0005576">
    <property type="term" value="C:extracellular region"/>
    <property type="evidence" value="ECO:0007669"/>
    <property type="project" value="UniProtKB-SubCell"/>
</dbReference>
<dbReference type="GO" id="GO:0000015">
    <property type="term" value="C:phosphopyruvate hydratase complex"/>
    <property type="evidence" value="ECO:0000318"/>
    <property type="project" value="GO_Central"/>
</dbReference>
<dbReference type="GO" id="GO:0000287">
    <property type="term" value="F:magnesium ion binding"/>
    <property type="evidence" value="ECO:0007669"/>
    <property type="project" value="UniProtKB-UniRule"/>
</dbReference>
<dbReference type="GO" id="GO:0004634">
    <property type="term" value="F:phosphopyruvate hydratase activity"/>
    <property type="evidence" value="ECO:0000318"/>
    <property type="project" value="GO_Central"/>
</dbReference>
<dbReference type="GO" id="GO:0006096">
    <property type="term" value="P:glycolytic process"/>
    <property type="evidence" value="ECO:0000318"/>
    <property type="project" value="GO_Central"/>
</dbReference>
<dbReference type="CDD" id="cd03313">
    <property type="entry name" value="enolase"/>
    <property type="match status" value="1"/>
</dbReference>
<dbReference type="Gene3D" id="3.20.20.120">
    <property type="entry name" value="Enolase-like C-terminal domain"/>
    <property type="match status" value="1"/>
</dbReference>
<dbReference type="Gene3D" id="3.30.390.10">
    <property type="entry name" value="Enolase-like, N-terminal domain"/>
    <property type="match status" value="1"/>
</dbReference>
<dbReference type="HAMAP" id="MF_00318">
    <property type="entry name" value="Enolase"/>
    <property type="match status" value="1"/>
</dbReference>
<dbReference type="InterPro" id="IPR000941">
    <property type="entry name" value="Enolase"/>
</dbReference>
<dbReference type="InterPro" id="IPR036849">
    <property type="entry name" value="Enolase-like_C_sf"/>
</dbReference>
<dbReference type="InterPro" id="IPR029017">
    <property type="entry name" value="Enolase-like_N"/>
</dbReference>
<dbReference type="InterPro" id="IPR020810">
    <property type="entry name" value="Enolase_C"/>
</dbReference>
<dbReference type="InterPro" id="IPR020809">
    <property type="entry name" value="Enolase_CS"/>
</dbReference>
<dbReference type="InterPro" id="IPR020811">
    <property type="entry name" value="Enolase_N"/>
</dbReference>
<dbReference type="NCBIfam" id="TIGR01060">
    <property type="entry name" value="eno"/>
    <property type="match status" value="1"/>
</dbReference>
<dbReference type="PANTHER" id="PTHR11902">
    <property type="entry name" value="ENOLASE"/>
    <property type="match status" value="1"/>
</dbReference>
<dbReference type="PANTHER" id="PTHR11902:SF1">
    <property type="entry name" value="ENOLASE"/>
    <property type="match status" value="1"/>
</dbReference>
<dbReference type="Pfam" id="PF00113">
    <property type="entry name" value="Enolase_C"/>
    <property type="match status" value="1"/>
</dbReference>
<dbReference type="Pfam" id="PF03952">
    <property type="entry name" value="Enolase_N"/>
    <property type="match status" value="1"/>
</dbReference>
<dbReference type="PIRSF" id="PIRSF001400">
    <property type="entry name" value="Enolase"/>
    <property type="match status" value="1"/>
</dbReference>
<dbReference type="PRINTS" id="PR00148">
    <property type="entry name" value="ENOLASE"/>
</dbReference>
<dbReference type="SFLD" id="SFLDS00001">
    <property type="entry name" value="Enolase"/>
    <property type="match status" value="1"/>
</dbReference>
<dbReference type="SFLD" id="SFLDF00002">
    <property type="entry name" value="enolase"/>
    <property type="match status" value="1"/>
</dbReference>
<dbReference type="SMART" id="SM01192">
    <property type="entry name" value="Enolase_C"/>
    <property type="match status" value="1"/>
</dbReference>
<dbReference type="SMART" id="SM01193">
    <property type="entry name" value="Enolase_N"/>
    <property type="match status" value="1"/>
</dbReference>
<dbReference type="SUPFAM" id="SSF51604">
    <property type="entry name" value="Enolase C-terminal domain-like"/>
    <property type="match status" value="1"/>
</dbReference>
<dbReference type="SUPFAM" id="SSF54826">
    <property type="entry name" value="Enolase N-terminal domain-like"/>
    <property type="match status" value="1"/>
</dbReference>
<dbReference type="PROSITE" id="PS00164">
    <property type="entry name" value="ENOLASE"/>
    <property type="match status" value="1"/>
</dbReference>
<protein>
    <recommendedName>
        <fullName evidence="1">Enolase</fullName>
        <ecNumber evidence="1">4.2.1.11</ecNumber>
    </recommendedName>
    <alternativeName>
        <fullName evidence="1">2-phospho-D-glycerate hydro-lyase</fullName>
    </alternativeName>
    <alternativeName>
        <fullName evidence="1">2-phosphoglycerate dehydratase</fullName>
    </alternativeName>
</protein>
<name>ENO_HELPY</name>
<evidence type="ECO:0000255" key="1">
    <source>
        <dbReference type="HAMAP-Rule" id="MF_00318"/>
    </source>
</evidence>
<evidence type="ECO:0000305" key="2"/>
<accession>P48285</accession>
<feature type="chain" id="PRO_0000133897" description="Enolase">
    <location>
        <begin position="1"/>
        <end position="426"/>
    </location>
</feature>
<feature type="active site" description="Proton donor" evidence="1">
    <location>
        <position position="205"/>
    </location>
</feature>
<feature type="active site" description="Proton acceptor" evidence="1">
    <location>
        <position position="338"/>
    </location>
</feature>
<feature type="binding site" evidence="1">
    <location>
        <position position="163"/>
    </location>
    <ligand>
        <name>(2R)-2-phosphoglycerate</name>
        <dbReference type="ChEBI" id="CHEBI:58289"/>
    </ligand>
</feature>
<feature type="binding site" evidence="1">
    <location>
        <position position="242"/>
    </location>
    <ligand>
        <name>Mg(2+)</name>
        <dbReference type="ChEBI" id="CHEBI:18420"/>
    </ligand>
</feature>
<feature type="binding site" evidence="1">
    <location>
        <position position="286"/>
    </location>
    <ligand>
        <name>Mg(2+)</name>
        <dbReference type="ChEBI" id="CHEBI:18420"/>
    </ligand>
</feature>
<feature type="binding site" evidence="1">
    <location>
        <position position="313"/>
    </location>
    <ligand>
        <name>Mg(2+)</name>
        <dbReference type="ChEBI" id="CHEBI:18420"/>
    </ligand>
</feature>
<feature type="binding site" evidence="1">
    <location>
        <position position="338"/>
    </location>
    <ligand>
        <name>(2R)-2-phosphoglycerate</name>
        <dbReference type="ChEBI" id="CHEBI:58289"/>
    </ligand>
</feature>
<feature type="binding site" evidence="1">
    <location>
        <position position="367"/>
    </location>
    <ligand>
        <name>(2R)-2-phosphoglycerate</name>
        <dbReference type="ChEBI" id="CHEBI:58289"/>
    </ligand>
</feature>
<feature type="binding site" evidence="1">
    <location>
        <position position="368"/>
    </location>
    <ligand>
        <name>(2R)-2-phosphoglycerate</name>
        <dbReference type="ChEBI" id="CHEBI:58289"/>
    </ligand>
</feature>
<feature type="binding site" evidence="1">
    <location>
        <position position="389"/>
    </location>
    <ligand>
        <name>(2R)-2-phosphoglycerate</name>
        <dbReference type="ChEBI" id="CHEBI:58289"/>
    </ligand>
</feature>
<feature type="sequence conflict" description="In Ref. 3; Z35478 and 2; AAC43380." evidence="2" ref="3 2">
    <original>V</original>
    <variation>I</variation>
    <location>
        <position position="26"/>
    </location>
</feature>
<feature type="sequence conflict" description="In Ref. 2; AAC43380." evidence="2" ref="2">
    <original>I</original>
    <variation>T</variation>
    <location>
        <position position="85"/>
    </location>
</feature>
<gene>
    <name evidence="1" type="primary">eno</name>
    <name type="ordered locus">HP_0154</name>
</gene>
<reference key="1">
    <citation type="journal article" date="1997" name="Nature">
        <title>The complete genome sequence of the gastric pathogen Helicobacter pylori.</title>
        <authorList>
            <person name="Tomb J.-F."/>
            <person name="White O."/>
            <person name="Kerlavage A.R."/>
            <person name="Clayton R.A."/>
            <person name="Sutton G.G."/>
            <person name="Fleischmann R.D."/>
            <person name="Ketchum K.A."/>
            <person name="Klenk H.-P."/>
            <person name="Gill S.R."/>
            <person name="Dougherty B.A."/>
            <person name="Nelson K.E."/>
            <person name="Quackenbush J."/>
            <person name="Zhou L."/>
            <person name="Kirkness E.F."/>
            <person name="Peterson S.N."/>
            <person name="Loftus B.J."/>
            <person name="Richardson D.L."/>
            <person name="Dodson R.J."/>
            <person name="Khalak H.G."/>
            <person name="Glodek A."/>
            <person name="McKenney K."/>
            <person name="FitzGerald L.M."/>
            <person name="Lee N."/>
            <person name="Adams M.D."/>
            <person name="Hickey E.K."/>
            <person name="Berg D.E."/>
            <person name="Gocayne J.D."/>
            <person name="Utterback T.R."/>
            <person name="Peterson J.D."/>
            <person name="Kelley J.M."/>
            <person name="Cotton M.D."/>
            <person name="Weidman J.F."/>
            <person name="Fujii C."/>
            <person name="Bowman C."/>
            <person name="Watthey L."/>
            <person name="Wallin E."/>
            <person name="Hayes W.S."/>
            <person name="Borodovsky M."/>
            <person name="Karp P.D."/>
            <person name="Smith H.O."/>
            <person name="Fraser C.M."/>
            <person name="Venter J.C."/>
        </authorList>
    </citation>
    <scope>NUCLEOTIDE SEQUENCE [LARGE SCALE GENOMIC DNA]</scope>
    <source>
        <strain>ATCC 700392 / 26695</strain>
    </source>
</reference>
<reference key="2">
    <citation type="journal article" date="1995" name="Infect. Immun.">
        <title>Isolation of the Helicobacter pylori recA gene and involvement of the recA region in resistance to low pH.</title>
        <authorList>
            <person name="Thompson S.A."/>
            <person name="Blaser M.J."/>
        </authorList>
    </citation>
    <scope>NUCLEOTIDE SEQUENCE [GENOMIC DNA] OF 1-178</scope>
    <source>
        <strain>ATCC 53726 / 84-183</strain>
    </source>
</reference>
<reference key="3">
    <citation type="journal article" date="1995" name="Mol. Gen. Genet.">
        <title>Cloning of the Helicobacter pylori recA gene and functional characterization of its product.</title>
        <authorList>
            <person name="Schmitt W."/>
            <person name="Odenbreit S."/>
            <person name="Heuermann D."/>
            <person name="Haas R."/>
        </authorList>
    </citation>
    <scope>NUCLEOTIDE SEQUENCE [GENOMIC DNA] OF 1-68</scope>
    <source>
        <strain>69A</strain>
    </source>
</reference>
<sequence length="426" mass="46534">MLTIKDIHALEVMDSRGNPTIQASVVLSDNTKASAIVPSGASTGKREALELRDNDKTRFLGKGVLRACENVNSVIKHHLIGLEAINQAFVDERLRALDGTPNYANLGANAVLGVSMALARASAKALNLPLYRYLGGANALTLPVPMLNIINGGTHANNSIDFQEYMIMPLGFESFKEALRASAEVYHTLKKLLDGKNQLTSVGDEGGFAPNFSNNVEPLEVISQAIEKAGYKLGEEIALALDVASSELVDENFNYHLKGENKILDSHELVAYYKELVAKYPIVSIEDGLSEDDWEGWAFLSKELGRQIQLVGDDLFVTNASLLQKGIEKNIANAVLIKPNQIGTISETLETIRLAKHHAYQCVMSHRSGESEDSFIADFAVALNTGEIKTGSTARSERIAKYNRLLEIEHELKGGIYIGKELFKHG</sequence>
<keyword id="KW-0963">Cytoplasm</keyword>
<keyword id="KW-0324">Glycolysis</keyword>
<keyword id="KW-0456">Lyase</keyword>
<keyword id="KW-0460">Magnesium</keyword>
<keyword id="KW-0479">Metal-binding</keyword>
<keyword id="KW-1185">Reference proteome</keyword>
<keyword id="KW-0964">Secreted</keyword>